<comment type="function">
    <text evidence="1">Catalyzes the attachment of glutamate to tRNA(Glu) in a two-step reaction: glutamate is first activated by ATP to form Glu-AMP and then transferred to the acceptor end of tRNA(Glu).</text>
</comment>
<comment type="catalytic activity">
    <reaction evidence="1">
        <text>tRNA(Glu) + L-glutamate + ATP = L-glutamyl-tRNA(Glu) + AMP + diphosphate</text>
        <dbReference type="Rhea" id="RHEA:23540"/>
        <dbReference type="Rhea" id="RHEA-COMP:9663"/>
        <dbReference type="Rhea" id="RHEA-COMP:9680"/>
        <dbReference type="ChEBI" id="CHEBI:29985"/>
        <dbReference type="ChEBI" id="CHEBI:30616"/>
        <dbReference type="ChEBI" id="CHEBI:33019"/>
        <dbReference type="ChEBI" id="CHEBI:78442"/>
        <dbReference type="ChEBI" id="CHEBI:78520"/>
        <dbReference type="ChEBI" id="CHEBI:456215"/>
        <dbReference type="EC" id="6.1.1.17"/>
    </reaction>
</comment>
<comment type="subunit">
    <text evidence="1">Monomer.</text>
</comment>
<comment type="subcellular location">
    <subcellularLocation>
        <location evidence="1">Cytoplasm</location>
    </subcellularLocation>
</comment>
<comment type="similarity">
    <text evidence="1">Belongs to the class-I aminoacyl-tRNA synthetase family. Glutamate--tRNA ligase type 1 subfamily.</text>
</comment>
<gene>
    <name evidence="1" type="primary">gltX</name>
    <name type="ordered locus">MGAS10750_Spy0198</name>
</gene>
<reference key="1">
    <citation type="journal article" date="2006" name="Proc. Natl. Acad. Sci. U.S.A.">
        <title>Molecular genetic anatomy of inter- and intraserotype variation in the human bacterial pathogen group A Streptococcus.</title>
        <authorList>
            <person name="Beres S.B."/>
            <person name="Richter E.W."/>
            <person name="Nagiec M.J."/>
            <person name="Sumby P."/>
            <person name="Porcella S.F."/>
            <person name="DeLeo F.R."/>
            <person name="Musser J.M."/>
        </authorList>
    </citation>
    <scope>NUCLEOTIDE SEQUENCE [LARGE SCALE GENOMIC DNA]</scope>
    <source>
        <strain>MGAS10750</strain>
    </source>
</reference>
<proteinExistence type="inferred from homology"/>
<accession>Q1J8L3</accession>
<evidence type="ECO:0000255" key="1">
    <source>
        <dbReference type="HAMAP-Rule" id="MF_00022"/>
    </source>
</evidence>
<dbReference type="EC" id="6.1.1.17" evidence="1"/>
<dbReference type="EMBL" id="CP000262">
    <property type="protein sequence ID" value="ABF37148.1"/>
    <property type="molecule type" value="Genomic_DNA"/>
</dbReference>
<dbReference type="SMR" id="Q1J8L3"/>
<dbReference type="KEGG" id="spi:MGAS10750_Spy0198"/>
<dbReference type="HOGENOM" id="CLU_015768_6_1_9"/>
<dbReference type="Proteomes" id="UP000002434">
    <property type="component" value="Chromosome"/>
</dbReference>
<dbReference type="GO" id="GO:0005829">
    <property type="term" value="C:cytosol"/>
    <property type="evidence" value="ECO:0007669"/>
    <property type="project" value="TreeGrafter"/>
</dbReference>
<dbReference type="GO" id="GO:0005524">
    <property type="term" value="F:ATP binding"/>
    <property type="evidence" value="ECO:0007669"/>
    <property type="project" value="UniProtKB-UniRule"/>
</dbReference>
<dbReference type="GO" id="GO:0004818">
    <property type="term" value="F:glutamate-tRNA ligase activity"/>
    <property type="evidence" value="ECO:0007669"/>
    <property type="project" value="UniProtKB-UniRule"/>
</dbReference>
<dbReference type="GO" id="GO:0000049">
    <property type="term" value="F:tRNA binding"/>
    <property type="evidence" value="ECO:0007669"/>
    <property type="project" value="InterPro"/>
</dbReference>
<dbReference type="GO" id="GO:0008270">
    <property type="term" value="F:zinc ion binding"/>
    <property type="evidence" value="ECO:0007669"/>
    <property type="project" value="InterPro"/>
</dbReference>
<dbReference type="GO" id="GO:0006424">
    <property type="term" value="P:glutamyl-tRNA aminoacylation"/>
    <property type="evidence" value="ECO:0007669"/>
    <property type="project" value="UniProtKB-UniRule"/>
</dbReference>
<dbReference type="CDD" id="cd00808">
    <property type="entry name" value="GluRS_core"/>
    <property type="match status" value="1"/>
</dbReference>
<dbReference type="FunFam" id="1.10.10.350:FF:000002">
    <property type="entry name" value="Glutamate--tRNA ligase"/>
    <property type="match status" value="1"/>
</dbReference>
<dbReference type="FunFam" id="3.40.50.620:FF:000007">
    <property type="entry name" value="Glutamate--tRNA ligase"/>
    <property type="match status" value="1"/>
</dbReference>
<dbReference type="Gene3D" id="1.10.10.350">
    <property type="match status" value="1"/>
</dbReference>
<dbReference type="Gene3D" id="3.40.50.620">
    <property type="entry name" value="HUPs"/>
    <property type="match status" value="1"/>
</dbReference>
<dbReference type="HAMAP" id="MF_00022">
    <property type="entry name" value="Glu_tRNA_synth_type1"/>
    <property type="match status" value="1"/>
</dbReference>
<dbReference type="InterPro" id="IPR045462">
    <property type="entry name" value="aa-tRNA-synth_I_cd-bd"/>
</dbReference>
<dbReference type="InterPro" id="IPR020751">
    <property type="entry name" value="aa-tRNA-synth_I_codon-bd_sub2"/>
</dbReference>
<dbReference type="InterPro" id="IPR001412">
    <property type="entry name" value="aa-tRNA-synth_I_CS"/>
</dbReference>
<dbReference type="InterPro" id="IPR008925">
    <property type="entry name" value="aa_tRNA-synth_I_cd-bd_sf"/>
</dbReference>
<dbReference type="InterPro" id="IPR004527">
    <property type="entry name" value="Glu-tRNA-ligase_bac/mito"/>
</dbReference>
<dbReference type="InterPro" id="IPR000924">
    <property type="entry name" value="Glu/Gln-tRNA-synth"/>
</dbReference>
<dbReference type="InterPro" id="IPR020058">
    <property type="entry name" value="Glu/Gln-tRNA-synth_Ib_cat-dom"/>
</dbReference>
<dbReference type="InterPro" id="IPR049940">
    <property type="entry name" value="GluQ/Sye"/>
</dbReference>
<dbReference type="InterPro" id="IPR033910">
    <property type="entry name" value="GluRS_core"/>
</dbReference>
<dbReference type="InterPro" id="IPR014729">
    <property type="entry name" value="Rossmann-like_a/b/a_fold"/>
</dbReference>
<dbReference type="NCBIfam" id="TIGR00464">
    <property type="entry name" value="gltX_bact"/>
    <property type="match status" value="1"/>
</dbReference>
<dbReference type="PANTHER" id="PTHR43311">
    <property type="entry name" value="GLUTAMATE--TRNA LIGASE"/>
    <property type="match status" value="1"/>
</dbReference>
<dbReference type="PANTHER" id="PTHR43311:SF2">
    <property type="entry name" value="GLUTAMATE--TRNA LIGASE, MITOCHONDRIAL-RELATED"/>
    <property type="match status" value="1"/>
</dbReference>
<dbReference type="Pfam" id="PF19269">
    <property type="entry name" value="Anticodon_2"/>
    <property type="match status" value="1"/>
</dbReference>
<dbReference type="Pfam" id="PF00749">
    <property type="entry name" value="tRNA-synt_1c"/>
    <property type="match status" value="1"/>
</dbReference>
<dbReference type="PRINTS" id="PR00987">
    <property type="entry name" value="TRNASYNTHGLU"/>
</dbReference>
<dbReference type="SUPFAM" id="SSF48163">
    <property type="entry name" value="An anticodon-binding domain of class I aminoacyl-tRNA synthetases"/>
    <property type="match status" value="1"/>
</dbReference>
<dbReference type="SUPFAM" id="SSF52374">
    <property type="entry name" value="Nucleotidylyl transferase"/>
    <property type="match status" value="1"/>
</dbReference>
<dbReference type="PROSITE" id="PS00178">
    <property type="entry name" value="AA_TRNA_LIGASE_I"/>
    <property type="match status" value="1"/>
</dbReference>
<keyword id="KW-0030">Aminoacyl-tRNA synthetase</keyword>
<keyword id="KW-0067">ATP-binding</keyword>
<keyword id="KW-0963">Cytoplasm</keyword>
<keyword id="KW-0436">Ligase</keyword>
<keyword id="KW-0547">Nucleotide-binding</keyword>
<keyword id="KW-0648">Protein biosynthesis</keyword>
<organism>
    <name type="scientific">Streptococcus pyogenes serotype M4 (strain MGAS10750)</name>
    <dbReference type="NCBI Taxonomy" id="370554"/>
    <lineage>
        <taxon>Bacteria</taxon>
        <taxon>Bacillati</taxon>
        <taxon>Bacillota</taxon>
        <taxon>Bacilli</taxon>
        <taxon>Lactobacillales</taxon>
        <taxon>Streptococcaceae</taxon>
        <taxon>Streptococcus</taxon>
    </lineage>
</organism>
<name>SYE_STRPF</name>
<sequence length="481" mass="55095">MSKPIRVRYAPSPTGLLHIGNARTALFNYLYARRHGGTFIIRIEDTDRKRHVEDGERSQLENLKWLGMDWDESPETHENYRQSERLALYQQYIDQLLAEGKAYKSYVTEEELAAERERQEAAGETPRYINEFIGMSADEKAKYISEREAAGVVPTVRLAVNESGIYKWTDMVKGDIEFEGGNIGGDWVIQKKDGYPTYNFAVVVDDHDMQISHVIRGDDHIANTPKQLMVYEALGWEAPEFGHMTLIINSETGKKLSKRDTNTLQFIEDYRKKGYMPEAVFNFIALLGWNPGGEEEIFSREQLIALFDENRLSKSPAAFDQKKMDWMSNEYLKHADFETVYALCKPFLEEAGRLTEKAEKLVELYKPQLKSADEIIPLTDLFFSDFPELTEAEKEVMAGETVSTVLQAFKAKLEAMSDEDFKPENIFPQIKAVQKETGIKGKNLFMPIRIAVSGEMHGPELPNTIYLLGRDKSIEHIKNML</sequence>
<protein>
    <recommendedName>
        <fullName evidence="1">Glutamate--tRNA ligase</fullName>
        <ecNumber evidence="1">6.1.1.17</ecNumber>
    </recommendedName>
    <alternativeName>
        <fullName evidence="1">Glutamyl-tRNA synthetase</fullName>
        <shortName evidence="1">GluRS</shortName>
    </alternativeName>
</protein>
<feature type="chain" id="PRO_1000001973" description="Glutamate--tRNA ligase">
    <location>
        <begin position="1"/>
        <end position="481"/>
    </location>
</feature>
<feature type="short sequence motif" description="'HIGH' region" evidence="1">
    <location>
        <begin position="11"/>
        <end position="21"/>
    </location>
</feature>
<feature type="short sequence motif" description="'KMSKS' region" evidence="1">
    <location>
        <begin position="255"/>
        <end position="259"/>
    </location>
</feature>
<feature type="binding site" evidence="1">
    <location>
        <position position="258"/>
    </location>
    <ligand>
        <name>ATP</name>
        <dbReference type="ChEBI" id="CHEBI:30616"/>
    </ligand>
</feature>